<comment type="function">
    <text evidence="1">Catalyzes oxygen-dependent 5-hydroxyuridine (ho5U) modification at position 34 in tRNAs.</text>
</comment>
<comment type="catalytic activity">
    <reaction evidence="1">
        <text>uridine(34) in tRNA + AH2 + O2 = 5-hydroxyuridine(34) in tRNA + A + H2O</text>
        <dbReference type="Rhea" id="RHEA:64224"/>
        <dbReference type="Rhea" id="RHEA-COMP:11727"/>
        <dbReference type="Rhea" id="RHEA-COMP:13381"/>
        <dbReference type="ChEBI" id="CHEBI:13193"/>
        <dbReference type="ChEBI" id="CHEBI:15377"/>
        <dbReference type="ChEBI" id="CHEBI:15379"/>
        <dbReference type="ChEBI" id="CHEBI:17499"/>
        <dbReference type="ChEBI" id="CHEBI:65315"/>
        <dbReference type="ChEBI" id="CHEBI:136877"/>
    </reaction>
</comment>
<comment type="similarity">
    <text evidence="1">Belongs to the TrhO family.</text>
</comment>
<feature type="chain" id="PRO_1000013759" description="tRNA uridine(34) hydroxylase">
    <location>
        <begin position="1"/>
        <end position="310"/>
    </location>
</feature>
<feature type="domain" description="Rhodanese" evidence="1">
    <location>
        <begin position="124"/>
        <end position="218"/>
    </location>
</feature>
<feature type="active site" description="Cysteine persulfide intermediate" evidence="1">
    <location>
        <position position="178"/>
    </location>
</feature>
<dbReference type="EC" id="1.14.-.-" evidence="1"/>
<dbReference type="EMBL" id="CT573326">
    <property type="protein sequence ID" value="CAK14346.1"/>
    <property type="molecule type" value="Genomic_DNA"/>
</dbReference>
<dbReference type="RefSeq" id="WP_011532761.1">
    <property type="nucleotide sequence ID" value="NC_008027.1"/>
</dbReference>
<dbReference type="SMR" id="Q1IDB3"/>
<dbReference type="STRING" id="384676.PSEEN1477"/>
<dbReference type="GeneID" id="32804729"/>
<dbReference type="KEGG" id="pen:PSEEN1477"/>
<dbReference type="eggNOG" id="COG1054">
    <property type="taxonomic scope" value="Bacteria"/>
</dbReference>
<dbReference type="HOGENOM" id="CLU_038878_0_0_6"/>
<dbReference type="OrthoDB" id="9778326at2"/>
<dbReference type="Proteomes" id="UP000000658">
    <property type="component" value="Chromosome"/>
</dbReference>
<dbReference type="GO" id="GO:0016705">
    <property type="term" value="F:oxidoreductase activity, acting on paired donors, with incorporation or reduction of molecular oxygen"/>
    <property type="evidence" value="ECO:0007669"/>
    <property type="project" value="UniProtKB-UniRule"/>
</dbReference>
<dbReference type="GO" id="GO:0006400">
    <property type="term" value="P:tRNA modification"/>
    <property type="evidence" value="ECO:0007669"/>
    <property type="project" value="UniProtKB-UniRule"/>
</dbReference>
<dbReference type="CDD" id="cd01518">
    <property type="entry name" value="RHOD_YceA"/>
    <property type="match status" value="1"/>
</dbReference>
<dbReference type="Gene3D" id="3.30.70.100">
    <property type="match status" value="1"/>
</dbReference>
<dbReference type="Gene3D" id="3.40.250.10">
    <property type="entry name" value="Rhodanese-like domain"/>
    <property type="match status" value="1"/>
</dbReference>
<dbReference type="HAMAP" id="MF_00469">
    <property type="entry name" value="TrhO"/>
    <property type="match status" value="1"/>
</dbReference>
<dbReference type="InterPro" id="IPR001763">
    <property type="entry name" value="Rhodanese-like_dom"/>
</dbReference>
<dbReference type="InterPro" id="IPR036873">
    <property type="entry name" value="Rhodanese-like_dom_sf"/>
</dbReference>
<dbReference type="InterPro" id="IPR020936">
    <property type="entry name" value="TrhO"/>
</dbReference>
<dbReference type="InterPro" id="IPR040503">
    <property type="entry name" value="TRHO_N"/>
</dbReference>
<dbReference type="NCBIfam" id="NF001136">
    <property type="entry name" value="PRK00142.1-4"/>
    <property type="match status" value="1"/>
</dbReference>
<dbReference type="PANTHER" id="PTHR43268:SF3">
    <property type="entry name" value="RHODANESE-LIKE DOMAIN-CONTAINING PROTEIN 7-RELATED"/>
    <property type="match status" value="1"/>
</dbReference>
<dbReference type="PANTHER" id="PTHR43268">
    <property type="entry name" value="THIOSULFATE SULFURTRANSFERASE/RHODANESE-LIKE DOMAIN-CONTAINING PROTEIN 2"/>
    <property type="match status" value="1"/>
</dbReference>
<dbReference type="Pfam" id="PF00581">
    <property type="entry name" value="Rhodanese"/>
    <property type="match status" value="1"/>
</dbReference>
<dbReference type="Pfam" id="PF17773">
    <property type="entry name" value="UPF0176_N"/>
    <property type="match status" value="1"/>
</dbReference>
<dbReference type="SMART" id="SM00450">
    <property type="entry name" value="RHOD"/>
    <property type="match status" value="1"/>
</dbReference>
<dbReference type="SUPFAM" id="SSF52821">
    <property type="entry name" value="Rhodanese/Cell cycle control phosphatase"/>
    <property type="match status" value="1"/>
</dbReference>
<dbReference type="PROSITE" id="PS50206">
    <property type="entry name" value="RHODANESE_3"/>
    <property type="match status" value="1"/>
</dbReference>
<accession>Q1IDB3</accession>
<protein>
    <recommendedName>
        <fullName evidence="1">tRNA uridine(34) hydroxylase</fullName>
        <ecNumber evidence="1">1.14.-.-</ecNumber>
    </recommendedName>
    <alternativeName>
        <fullName evidence="1">tRNA hydroxylation protein O</fullName>
    </alternativeName>
</protein>
<evidence type="ECO:0000255" key="1">
    <source>
        <dbReference type="HAMAP-Rule" id="MF_00469"/>
    </source>
</evidence>
<sequence length="310" mass="35086">MSQPIVVAALYKFVTLEDYVELRDPLLKAMTDNGVKGTLLLANEGINGTVSATREGIDALLAWLRNDPRLVDVDHKESYCDEQPFYRTKVKLKKEIVTLGVPGVDPNKAVGTYVDPKDWNALISDPEVLLIDTRNDYEVAIGTFKGAIDPKTETFREFPDYIKANFDPSKHKKVAMFCTGGIRCEKASSYMLGEGFEAVYHLKGGILKYFEEVAQEESLWDGDCFVFDNRVTVRHDLSEGEYDQCHACRHPIDVKDRESEHYSPGVSCPHCWDTLSEKTRRSAIDRQKQIELAKARNQPHPIGYNYKAEA</sequence>
<name>TRHO_PSEE4</name>
<proteinExistence type="inferred from homology"/>
<gene>
    <name evidence="1" type="primary">trhO</name>
    <name type="ordered locus">PSEEN1477</name>
</gene>
<reference key="1">
    <citation type="journal article" date="2006" name="Nat. Biotechnol.">
        <title>Complete genome sequence of the entomopathogenic and metabolically versatile soil bacterium Pseudomonas entomophila.</title>
        <authorList>
            <person name="Vodovar N."/>
            <person name="Vallenet D."/>
            <person name="Cruveiller S."/>
            <person name="Rouy Z."/>
            <person name="Barbe V."/>
            <person name="Acosta C."/>
            <person name="Cattolico L."/>
            <person name="Jubin C."/>
            <person name="Lajus A."/>
            <person name="Segurens B."/>
            <person name="Vacherie B."/>
            <person name="Wincker P."/>
            <person name="Weissenbach J."/>
            <person name="Lemaitre B."/>
            <person name="Medigue C."/>
            <person name="Boccard F."/>
        </authorList>
    </citation>
    <scope>NUCLEOTIDE SEQUENCE [LARGE SCALE GENOMIC DNA]</scope>
    <source>
        <strain>L48</strain>
    </source>
</reference>
<keyword id="KW-0560">Oxidoreductase</keyword>
<keyword id="KW-0819">tRNA processing</keyword>
<organism>
    <name type="scientific">Pseudomonas entomophila (strain L48)</name>
    <dbReference type="NCBI Taxonomy" id="384676"/>
    <lineage>
        <taxon>Bacteria</taxon>
        <taxon>Pseudomonadati</taxon>
        <taxon>Pseudomonadota</taxon>
        <taxon>Gammaproteobacteria</taxon>
        <taxon>Pseudomonadales</taxon>
        <taxon>Pseudomonadaceae</taxon>
        <taxon>Pseudomonas</taxon>
    </lineage>
</organism>